<proteinExistence type="inferred from homology"/>
<organism>
    <name type="scientific">Shewanella piezotolerans (strain WP3 / JCM 13877)</name>
    <dbReference type="NCBI Taxonomy" id="225849"/>
    <lineage>
        <taxon>Bacteria</taxon>
        <taxon>Pseudomonadati</taxon>
        <taxon>Pseudomonadota</taxon>
        <taxon>Gammaproteobacteria</taxon>
        <taxon>Alteromonadales</taxon>
        <taxon>Shewanellaceae</taxon>
        <taxon>Shewanella</taxon>
    </lineage>
</organism>
<feature type="chain" id="PRO_1000118922" description="CinA-like protein">
    <location>
        <begin position="1"/>
        <end position="424"/>
    </location>
</feature>
<gene>
    <name type="ordered locus">swp_2051</name>
</gene>
<reference key="1">
    <citation type="journal article" date="2008" name="PLoS ONE">
        <title>Environmental adaptation: genomic analysis of the piezotolerant and psychrotolerant deep-sea iron reducing bacterium Shewanella piezotolerans WP3.</title>
        <authorList>
            <person name="Wang F."/>
            <person name="Wang J."/>
            <person name="Jian H."/>
            <person name="Zhang B."/>
            <person name="Li S."/>
            <person name="Wang F."/>
            <person name="Zeng X."/>
            <person name="Gao L."/>
            <person name="Bartlett D.H."/>
            <person name="Yu J."/>
            <person name="Hu S."/>
            <person name="Xiao X."/>
        </authorList>
    </citation>
    <scope>NUCLEOTIDE SEQUENCE [LARGE SCALE GENOMIC DNA]</scope>
    <source>
        <strain>WP3 / JCM 13877</strain>
    </source>
</reference>
<dbReference type="EMBL" id="CP000472">
    <property type="protein sequence ID" value="ACJ28807.1"/>
    <property type="molecule type" value="Genomic_DNA"/>
</dbReference>
<dbReference type="RefSeq" id="WP_020912169.1">
    <property type="nucleotide sequence ID" value="NC_011566.1"/>
</dbReference>
<dbReference type="SMR" id="B8CNH3"/>
<dbReference type="STRING" id="225849.swp_2051"/>
<dbReference type="KEGG" id="swp:swp_2051"/>
<dbReference type="eggNOG" id="COG1058">
    <property type="taxonomic scope" value="Bacteria"/>
</dbReference>
<dbReference type="eggNOG" id="COG1546">
    <property type="taxonomic scope" value="Bacteria"/>
</dbReference>
<dbReference type="HOGENOM" id="CLU_030805_9_2_6"/>
<dbReference type="OrthoDB" id="9801454at2"/>
<dbReference type="Proteomes" id="UP000000753">
    <property type="component" value="Chromosome"/>
</dbReference>
<dbReference type="CDD" id="cd00885">
    <property type="entry name" value="cinA"/>
    <property type="match status" value="1"/>
</dbReference>
<dbReference type="Gene3D" id="3.90.950.20">
    <property type="entry name" value="CinA-like"/>
    <property type="match status" value="1"/>
</dbReference>
<dbReference type="Gene3D" id="3.40.980.10">
    <property type="entry name" value="MoaB/Mog-like domain"/>
    <property type="match status" value="1"/>
</dbReference>
<dbReference type="HAMAP" id="MF_00226_B">
    <property type="entry name" value="CinA_B"/>
    <property type="match status" value="1"/>
</dbReference>
<dbReference type="InterPro" id="IPR050101">
    <property type="entry name" value="CinA"/>
</dbReference>
<dbReference type="InterPro" id="IPR036653">
    <property type="entry name" value="CinA-like_C"/>
</dbReference>
<dbReference type="InterPro" id="IPR008136">
    <property type="entry name" value="CinA_C"/>
</dbReference>
<dbReference type="InterPro" id="IPR008135">
    <property type="entry name" value="Competence-induced_CinA"/>
</dbReference>
<dbReference type="InterPro" id="IPR036425">
    <property type="entry name" value="MoaB/Mog-like_dom_sf"/>
</dbReference>
<dbReference type="InterPro" id="IPR001453">
    <property type="entry name" value="MoaB/Mog_dom"/>
</dbReference>
<dbReference type="NCBIfam" id="TIGR00200">
    <property type="entry name" value="cinA_nterm"/>
    <property type="match status" value="1"/>
</dbReference>
<dbReference type="NCBIfam" id="TIGR00177">
    <property type="entry name" value="molyb_syn"/>
    <property type="match status" value="1"/>
</dbReference>
<dbReference type="NCBIfam" id="TIGR00199">
    <property type="entry name" value="PncC_domain"/>
    <property type="match status" value="1"/>
</dbReference>
<dbReference type="PANTHER" id="PTHR13939">
    <property type="entry name" value="NICOTINAMIDE-NUCLEOTIDE AMIDOHYDROLASE PNCC"/>
    <property type="match status" value="1"/>
</dbReference>
<dbReference type="PANTHER" id="PTHR13939:SF0">
    <property type="entry name" value="NMN AMIDOHYDROLASE-LIKE PROTEIN YFAY"/>
    <property type="match status" value="1"/>
</dbReference>
<dbReference type="Pfam" id="PF02464">
    <property type="entry name" value="CinA"/>
    <property type="match status" value="1"/>
</dbReference>
<dbReference type="Pfam" id="PF00994">
    <property type="entry name" value="MoCF_biosynth"/>
    <property type="match status" value="1"/>
</dbReference>
<dbReference type="PIRSF" id="PIRSF006728">
    <property type="entry name" value="CinA"/>
    <property type="match status" value="1"/>
</dbReference>
<dbReference type="SMART" id="SM00852">
    <property type="entry name" value="MoCF_biosynth"/>
    <property type="match status" value="1"/>
</dbReference>
<dbReference type="SUPFAM" id="SSF142433">
    <property type="entry name" value="CinA-like"/>
    <property type="match status" value="1"/>
</dbReference>
<dbReference type="SUPFAM" id="SSF53218">
    <property type="entry name" value="Molybdenum cofactor biosynthesis proteins"/>
    <property type="match status" value="1"/>
</dbReference>
<comment type="similarity">
    <text evidence="1">Belongs to the CinA family.</text>
</comment>
<sequence>MKLEMICTGEEVLAGQIVDTNAAWFANMLMEHGVECQRRITVGDRLEDLVAVFQERSTEADVIVVNGGLGPTSDDLSSEAMALAKGEPLVENKIWRDRLDDWFTRNGRVMAESNLKQALIPESAIMIDNPVGTACGFAVKLNRAWLFFTPGVPFEFKQMIKEQFIPFINERFEIAGDVALRKYLTLGQGESSLADALETIVLPEGITIGYRSSMPHIEIKLFARGKAAISEMDKIEAQIRFLLGTAIVANNKKSLAEEIHALLIDSGKTLSAAESCTGGMIASQLISHAGSSAYLDQGLVTYSNESKVKVLGVKPETLDDHGAVSIATVEEMASGARAILNSDYALATSGIAGPTGGTEDKPVGTVAIALATKSGVYSQMIKLPRRSRDLVRSLSTAVAFDMLRRELLDEAVIVDYGSIKRFQK</sequence>
<protein>
    <recommendedName>
        <fullName evidence="1">CinA-like protein</fullName>
    </recommendedName>
</protein>
<name>CINAL_SHEPW</name>
<evidence type="ECO:0000255" key="1">
    <source>
        <dbReference type="HAMAP-Rule" id="MF_00226"/>
    </source>
</evidence>
<accession>B8CNH3</accession>